<organism>
    <name type="scientific">Caulobacter sp. (strain K31)</name>
    <dbReference type="NCBI Taxonomy" id="366602"/>
    <lineage>
        <taxon>Bacteria</taxon>
        <taxon>Pseudomonadati</taxon>
        <taxon>Pseudomonadota</taxon>
        <taxon>Alphaproteobacteria</taxon>
        <taxon>Caulobacterales</taxon>
        <taxon>Caulobacteraceae</taxon>
        <taxon>Caulobacter</taxon>
    </lineage>
</organism>
<accession>B0SUP2</accession>
<sequence>MDRAQKQESIEALKSVFADAGAVVVTHYMGMTVAEMTELRSRLRKEDATFQVVKNTLVQKALDGSIGEAGDALFTGPVAIAFGSDPVSAAKIVTQYAKENDKLKLVGGILGQTTVLDEAAVRALATLPSLDQIRGKLIGLIQAPATKIAGVLQAPAGQLARVLNAYATKDAA</sequence>
<proteinExistence type="inferred from homology"/>
<name>RL10_CAUSK</name>
<protein>
    <recommendedName>
        <fullName evidence="1">Large ribosomal subunit protein uL10</fullName>
    </recommendedName>
    <alternativeName>
        <fullName evidence="2">50S ribosomal protein L10</fullName>
    </alternativeName>
</protein>
<comment type="function">
    <text evidence="1">Forms part of the ribosomal stalk, playing a central role in the interaction of the ribosome with GTP-bound translation factors.</text>
</comment>
<comment type="subunit">
    <text evidence="1">Part of the ribosomal stalk of the 50S ribosomal subunit. The N-terminus interacts with L11 and the large rRNA to form the base of the stalk. The C-terminus forms an elongated spine to which L12 dimers bind in a sequential fashion forming a multimeric L10(L12)X complex.</text>
</comment>
<comment type="similarity">
    <text evidence="1">Belongs to the universal ribosomal protein uL10 family.</text>
</comment>
<dbReference type="EMBL" id="CP000927">
    <property type="protein sequence ID" value="ABZ69920.1"/>
    <property type="molecule type" value="Genomic_DNA"/>
</dbReference>
<dbReference type="SMR" id="B0SUP2"/>
<dbReference type="STRING" id="366602.Caul_0789"/>
<dbReference type="KEGG" id="cak:Caul_0789"/>
<dbReference type="eggNOG" id="COG0244">
    <property type="taxonomic scope" value="Bacteria"/>
</dbReference>
<dbReference type="HOGENOM" id="CLU_092227_0_0_5"/>
<dbReference type="OrthoDB" id="9791972at2"/>
<dbReference type="GO" id="GO:0015934">
    <property type="term" value="C:large ribosomal subunit"/>
    <property type="evidence" value="ECO:0007669"/>
    <property type="project" value="InterPro"/>
</dbReference>
<dbReference type="GO" id="GO:0070180">
    <property type="term" value="F:large ribosomal subunit rRNA binding"/>
    <property type="evidence" value="ECO:0007669"/>
    <property type="project" value="UniProtKB-UniRule"/>
</dbReference>
<dbReference type="GO" id="GO:0003735">
    <property type="term" value="F:structural constituent of ribosome"/>
    <property type="evidence" value="ECO:0007669"/>
    <property type="project" value="InterPro"/>
</dbReference>
<dbReference type="GO" id="GO:0006412">
    <property type="term" value="P:translation"/>
    <property type="evidence" value="ECO:0007669"/>
    <property type="project" value="UniProtKB-UniRule"/>
</dbReference>
<dbReference type="CDD" id="cd05797">
    <property type="entry name" value="Ribosomal_L10"/>
    <property type="match status" value="1"/>
</dbReference>
<dbReference type="Gene3D" id="3.30.70.1730">
    <property type="match status" value="1"/>
</dbReference>
<dbReference type="Gene3D" id="6.10.250.290">
    <property type="match status" value="1"/>
</dbReference>
<dbReference type="HAMAP" id="MF_00362">
    <property type="entry name" value="Ribosomal_uL10"/>
    <property type="match status" value="1"/>
</dbReference>
<dbReference type="InterPro" id="IPR001790">
    <property type="entry name" value="Ribosomal_uL10"/>
</dbReference>
<dbReference type="InterPro" id="IPR043141">
    <property type="entry name" value="Ribosomal_uL10-like_sf"/>
</dbReference>
<dbReference type="InterPro" id="IPR022973">
    <property type="entry name" value="Ribosomal_uL10_bac"/>
</dbReference>
<dbReference type="InterPro" id="IPR047865">
    <property type="entry name" value="Ribosomal_uL10_bac_type"/>
</dbReference>
<dbReference type="InterPro" id="IPR002363">
    <property type="entry name" value="Ribosomal_uL10_CS_bac"/>
</dbReference>
<dbReference type="NCBIfam" id="NF000955">
    <property type="entry name" value="PRK00099.1-1"/>
    <property type="match status" value="1"/>
</dbReference>
<dbReference type="PANTHER" id="PTHR11560">
    <property type="entry name" value="39S RIBOSOMAL PROTEIN L10, MITOCHONDRIAL"/>
    <property type="match status" value="1"/>
</dbReference>
<dbReference type="Pfam" id="PF00466">
    <property type="entry name" value="Ribosomal_L10"/>
    <property type="match status" value="1"/>
</dbReference>
<dbReference type="SUPFAM" id="SSF160369">
    <property type="entry name" value="Ribosomal protein L10-like"/>
    <property type="match status" value="1"/>
</dbReference>
<dbReference type="PROSITE" id="PS01109">
    <property type="entry name" value="RIBOSOMAL_L10"/>
    <property type="match status" value="1"/>
</dbReference>
<evidence type="ECO:0000255" key="1">
    <source>
        <dbReference type="HAMAP-Rule" id="MF_00362"/>
    </source>
</evidence>
<evidence type="ECO:0000305" key="2"/>
<reference key="1">
    <citation type="submission" date="2008-01" db="EMBL/GenBank/DDBJ databases">
        <title>Complete sequence of chromosome of Caulobacter sp. K31.</title>
        <authorList>
            <consortium name="US DOE Joint Genome Institute"/>
            <person name="Copeland A."/>
            <person name="Lucas S."/>
            <person name="Lapidus A."/>
            <person name="Barry K."/>
            <person name="Glavina del Rio T."/>
            <person name="Dalin E."/>
            <person name="Tice H."/>
            <person name="Pitluck S."/>
            <person name="Bruce D."/>
            <person name="Goodwin L."/>
            <person name="Thompson L.S."/>
            <person name="Brettin T."/>
            <person name="Detter J.C."/>
            <person name="Han C."/>
            <person name="Schmutz J."/>
            <person name="Larimer F."/>
            <person name="Land M."/>
            <person name="Hauser L."/>
            <person name="Kyrpides N."/>
            <person name="Kim E."/>
            <person name="Stephens C."/>
            <person name="Richardson P."/>
        </authorList>
    </citation>
    <scope>NUCLEOTIDE SEQUENCE [LARGE SCALE GENOMIC DNA]</scope>
    <source>
        <strain>K31</strain>
    </source>
</reference>
<feature type="chain" id="PRO_1000079536" description="Large ribosomal subunit protein uL10">
    <location>
        <begin position="1"/>
        <end position="172"/>
    </location>
</feature>
<keyword id="KW-0687">Ribonucleoprotein</keyword>
<keyword id="KW-0689">Ribosomal protein</keyword>
<keyword id="KW-0694">RNA-binding</keyword>
<keyword id="KW-0699">rRNA-binding</keyword>
<gene>
    <name evidence="1" type="primary">rplJ</name>
    <name type="ordered locus">Caul_0789</name>
</gene>